<proteinExistence type="inferred from homology"/>
<name>RLMKL_SHEB9</name>
<organism>
    <name type="scientific">Shewanella baltica (strain OS195)</name>
    <dbReference type="NCBI Taxonomy" id="399599"/>
    <lineage>
        <taxon>Bacteria</taxon>
        <taxon>Pseudomonadati</taxon>
        <taxon>Pseudomonadota</taxon>
        <taxon>Gammaproteobacteria</taxon>
        <taxon>Alteromonadales</taxon>
        <taxon>Shewanellaceae</taxon>
        <taxon>Shewanella</taxon>
    </lineage>
</organism>
<keyword id="KW-0963">Cytoplasm</keyword>
<keyword id="KW-0489">Methyltransferase</keyword>
<keyword id="KW-0694">RNA-binding</keyword>
<keyword id="KW-0698">rRNA processing</keyword>
<keyword id="KW-0949">S-adenosyl-L-methionine</keyword>
<keyword id="KW-0808">Transferase</keyword>
<protein>
    <recommendedName>
        <fullName evidence="1">Ribosomal RNA large subunit methyltransferase K/L</fullName>
    </recommendedName>
    <domain>
        <recommendedName>
            <fullName evidence="1">23S rRNA m2G2445 methyltransferase</fullName>
            <ecNumber evidence="1">2.1.1.173</ecNumber>
        </recommendedName>
        <alternativeName>
            <fullName evidence="1">rRNA (guanine-N(2)-)-methyltransferase RlmL</fullName>
        </alternativeName>
    </domain>
    <domain>
        <recommendedName>
            <fullName evidence="1">23S rRNA m7G2069 methyltransferase</fullName>
            <ecNumber evidence="1">2.1.1.264</ecNumber>
        </recommendedName>
        <alternativeName>
            <fullName evidence="1">rRNA (guanine-N(7)-)-methyltransferase RlmK</fullName>
        </alternativeName>
    </domain>
</protein>
<sequence length="709" mass="79680">MLNFFAAAPKGFEYSLAQELTEFGATEVKESVAGVYFTASLALAYRITLWTRLASRIVLVIYKGSCESAEQLYNAAYCVDWPAHFSNKSTFSIDFHGTGGFLNNTQFGALKIKDAIVDRFRDDDIERPNVSRVDAEFKVDAHFRNGVITIAMNFSGPSLHQRGYRSTTGEAPLKENLAANMLVRSGWQASPSTLLDPFCGSGTVLIEAALMAADIAPGLQRSRFGFEHWRRHDKAVWQEIVEEAKARASLGVKRCEIKFYGSDIDSRLVALAKRNAENAGVLELIEFKVADALTIAPPAESGYLITNPPYGERLGNVSELLQLYYQLGDKFKKEFGGWKVAMLCSDIELVSSLKLKADKQMKMFNGALECAFNIYTLHANSTRRDTPVLPDGVDIADIAPAFANRIKKNAKLLEKWAKKEGIDSYRIYDADIPEYNVAVDKYLDYVIIQEYMAPATIPEAVTKRRLSDVLLALPSAIGINPNKMIMKTRERQKGTSQYQKLDERKLELITTEYGAKFKLNLTGYLDTGLFLDHRLTRRLVGQKSKGRRVLNLFSYTGSASVHAALGGAKSVTTVDMSNTYIAWAKDNFALNGLQGKQYEFVQSDCMQWIRDCNEQYDLIFIDPPTFSNSKRMEDSFDVQRDHVNLLASLVKLLSPTGELVFSNNKRKFKMDIETLTKMNINVTNIDDVTLPMDYKRNPHIHNTWLITHA</sequence>
<feature type="chain" id="PRO_0000366822" description="Ribosomal RNA large subunit methyltransferase K/L">
    <location>
        <begin position="1"/>
        <end position="709"/>
    </location>
</feature>
<feature type="domain" description="THUMP" evidence="1">
    <location>
        <begin position="43"/>
        <end position="154"/>
    </location>
</feature>
<reference key="1">
    <citation type="submission" date="2007-11" db="EMBL/GenBank/DDBJ databases">
        <title>Complete sequence of chromosome of Shewanella baltica OS195.</title>
        <authorList>
            <consortium name="US DOE Joint Genome Institute"/>
            <person name="Copeland A."/>
            <person name="Lucas S."/>
            <person name="Lapidus A."/>
            <person name="Barry K."/>
            <person name="Glavina del Rio T."/>
            <person name="Dalin E."/>
            <person name="Tice H."/>
            <person name="Pitluck S."/>
            <person name="Chain P."/>
            <person name="Malfatti S."/>
            <person name="Shin M."/>
            <person name="Vergez L."/>
            <person name="Schmutz J."/>
            <person name="Larimer F."/>
            <person name="Land M."/>
            <person name="Hauser L."/>
            <person name="Kyrpides N."/>
            <person name="Kim E."/>
            <person name="Brettar I."/>
            <person name="Rodrigues J."/>
            <person name="Konstantinidis K."/>
            <person name="Klappenbach J."/>
            <person name="Hofle M."/>
            <person name="Tiedje J."/>
            <person name="Richardson P."/>
        </authorList>
    </citation>
    <scope>NUCLEOTIDE SEQUENCE [LARGE SCALE GENOMIC DNA]</scope>
    <source>
        <strain>OS195</strain>
    </source>
</reference>
<accession>A9L591</accession>
<evidence type="ECO:0000255" key="1">
    <source>
        <dbReference type="HAMAP-Rule" id="MF_01858"/>
    </source>
</evidence>
<gene>
    <name evidence="1" type="primary">rlmL</name>
    <name type="ordered locus">Sbal195_2685</name>
</gene>
<comment type="function">
    <text evidence="1">Specifically methylates the guanine in position 2445 (m2G2445) and the guanine in position 2069 (m7G2069) of 23S rRNA.</text>
</comment>
<comment type="catalytic activity">
    <reaction evidence="1">
        <text>guanosine(2445) in 23S rRNA + S-adenosyl-L-methionine = N(2)-methylguanosine(2445) in 23S rRNA + S-adenosyl-L-homocysteine + H(+)</text>
        <dbReference type="Rhea" id="RHEA:42740"/>
        <dbReference type="Rhea" id="RHEA-COMP:10215"/>
        <dbReference type="Rhea" id="RHEA-COMP:10216"/>
        <dbReference type="ChEBI" id="CHEBI:15378"/>
        <dbReference type="ChEBI" id="CHEBI:57856"/>
        <dbReference type="ChEBI" id="CHEBI:59789"/>
        <dbReference type="ChEBI" id="CHEBI:74269"/>
        <dbReference type="ChEBI" id="CHEBI:74481"/>
        <dbReference type="EC" id="2.1.1.173"/>
    </reaction>
</comment>
<comment type="catalytic activity">
    <reaction evidence="1">
        <text>guanosine(2069) in 23S rRNA + S-adenosyl-L-methionine = N(2)-methylguanosine(2069) in 23S rRNA + S-adenosyl-L-homocysteine + H(+)</text>
        <dbReference type="Rhea" id="RHEA:43772"/>
        <dbReference type="Rhea" id="RHEA-COMP:10688"/>
        <dbReference type="Rhea" id="RHEA-COMP:10689"/>
        <dbReference type="ChEBI" id="CHEBI:15378"/>
        <dbReference type="ChEBI" id="CHEBI:57856"/>
        <dbReference type="ChEBI" id="CHEBI:59789"/>
        <dbReference type="ChEBI" id="CHEBI:74269"/>
        <dbReference type="ChEBI" id="CHEBI:74481"/>
        <dbReference type="EC" id="2.1.1.264"/>
    </reaction>
</comment>
<comment type="subcellular location">
    <subcellularLocation>
        <location evidence="1">Cytoplasm</location>
    </subcellularLocation>
</comment>
<comment type="similarity">
    <text evidence="1">Belongs to the methyltransferase superfamily. RlmKL family.</text>
</comment>
<dbReference type="EC" id="2.1.1.173" evidence="1"/>
<dbReference type="EC" id="2.1.1.264" evidence="1"/>
<dbReference type="EMBL" id="CP000891">
    <property type="protein sequence ID" value="ABX49853.1"/>
    <property type="molecule type" value="Genomic_DNA"/>
</dbReference>
<dbReference type="SMR" id="A9L591"/>
<dbReference type="KEGG" id="sbn:Sbal195_2685"/>
<dbReference type="HOGENOM" id="CLU_014042_2_0_6"/>
<dbReference type="Proteomes" id="UP000000770">
    <property type="component" value="Chromosome"/>
</dbReference>
<dbReference type="GO" id="GO:0005737">
    <property type="term" value="C:cytoplasm"/>
    <property type="evidence" value="ECO:0007669"/>
    <property type="project" value="UniProtKB-SubCell"/>
</dbReference>
<dbReference type="GO" id="GO:0052915">
    <property type="term" value="F:23S rRNA (guanine(2445)-N(2))-methyltransferase activity"/>
    <property type="evidence" value="ECO:0007669"/>
    <property type="project" value="UniProtKB-UniRule"/>
</dbReference>
<dbReference type="GO" id="GO:0003723">
    <property type="term" value="F:RNA binding"/>
    <property type="evidence" value="ECO:0007669"/>
    <property type="project" value="UniProtKB-KW"/>
</dbReference>
<dbReference type="GO" id="GO:0070043">
    <property type="term" value="F:rRNA (guanine-N7-)-methyltransferase activity"/>
    <property type="evidence" value="ECO:0007669"/>
    <property type="project" value="UniProtKB-UniRule"/>
</dbReference>
<dbReference type="CDD" id="cd02440">
    <property type="entry name" value="AdoMet_MTases"/>
    <property type="match status" value="2"/>
</dbReference>
<dbReference type="CDD" id="cd11715">
    <property type="entry name" value="THUMP_AdoMetMT"/>
    <property type="match status" value="1"/>
</dbReference>
<dbReference type="FunFam" id="3.40.50.150:FF:000039">
    <property type="entry name" value="Ribosomal RNA large subunit methyltransferase K/L"/>
    <property type="match status" value="1"/>
</dbReference>
<dbReference type="Gene3D" id="3.30.2130.30">
    <property type="match status" value="1"/>
</dbReference>
<dbReference type="Gene3D" id="3.30.750.80">
    <property type="entry name" value="RNA methyltransferase domain (HRMD) like"/>
    <property type="match status" value="1"/>
</dbReference>
<dbReference type="Gene3D" id="3.40.50.150">
    <property type="entry name" value="Vaccinia Virus protein VP39"/>
    <property type="match status" value="2"/>
</dbReference>
<dbReference type="HAMAP" id="MF_01858">
    <property type="entry name" value="23SrRNA_methyltr_KL"/>
    <property type="match status" value="1"/>
</dbReference>
<dbReference type="InterPro" id="IPR017244">
    <property type="entry name" value="23SrRNA_methyltr_KL"/>
</dbReference>
<dbReference type="InterPro" id="IPR002052">
    <property type="entry name" value="DNA_methylase_N6_adenine_CS"/>
</dbReference>
<dbReference type="InterPro" id="IPR000241">
    <property type="entry name" value="RlmKL-like_Mtase"/>
</dbReference>
<dbReference type="InterPro" id="IPR053943">
    <property type="entry name" value="RlmKL-like_Mtase_CS"/>
</dbReference>
<dbReference type="InterPro" id="IPR054170">
    <property type="entry name" value="RlmL_1st"/>
</dbReference>
<dbReference type="InterPro" id="IPR019614">
    <property type="entry name" value="SAM-dep_methyl-trfase"/>
</dbReference>
<dbReference type="InterPro" id="IPR029063">
    <property type="entry name" value="SAM-dependent_MTases_sf"/>
</dbReference>
<dbReference type="InterPro" id="IPR004114">
    <property type="entry name" value="THUMP_dom"/>
</dbReference>
<dbReference type="NCBIfam" id="NF008748">
    <property type="entry name" value="PRK11783.1"/>
    <property type="match status" value="1"/>
</dbReference>
<dbReference type="PANTHER" id="PTHR47313">
    <property type="entry name" value="RIBOSOMAL RNA LARGE SUBUNIT METHYLTRANSFERASE K/L"/>
    <property type="match status" value="1"/>
</dbReference>
<dbReference type="PANTHER" id="PTHR47313:SF1">
    <property type="entry name" value="RIBOSOMAL RNA LARGE SUBUNIT METHYLTRANSFERASE K_L"/>
    <property type="match status" value="1"/>
</dbReference>
<dbReference type="Pfam" id="PF10672">
    <property type="entry name" value="Methyltrans_SAM"/>
    <property type="match status" value="1"/>
</dbReference>
<dbReference type="Pfam" id="PF22020">
    <property type="entry name" value="RlmL_1st"/>
    <property type="match status" value="1"/>
</dbReference>
<dbReference type="Pfam" id="PF02926">
    <property type="entry name" value="THUMP"/>
    <property type="match status" value="1"/>
</dbReference>
<dbReference type="Pfam" id="PF01170">
    <property type="entry name" value="UPF0020"/>
    <property type="match status" value="1"/>
</dbReference>
<dbReference type="PIRSF" id="PIRSF037618">
    <property type="entry name" value="RNA_Mtase_bacteria_prd"/>
    <property type="match status" value="1"/>
</dbReference>
<dbReference type="SMART" id="SM00981">
    <property type="entry name" value="THUMP"/>
    <property type="match status" value="1"/>
</dbReference>
<dbReference type="SUPFAM" id="SSF53335">
    <property type="entry name" value="S-adenosyl-L-methionine-dependent methyltransferases"/>
    <property type="match status" value="2"/>
</dbReference>
<dbReference type="PROSITE" id="PS51165">
    <property type="entry name" value="THUMP"/>
    <property type="match status" value="1"/>
</dbReference>
<dbReference type="PROSITE" id="PS01261">
    <property type="entry name" value="UPF0020"/>
    <property type="match status" value="1"/>
</dbReference>